<name>NUOI_COXBN</name>
<organism>
    <name type="scientific">Coxiella burnetii (strain Dugway 5J108-111)</name>
    <dbReference type="NCBI Taxonomy" id="434922"/>
    <lineage>
        <taxon>Bacteria</taxon>
        <taxon>Pseudomonadati</taxon>
        <taxon>Pseudomonadota</taxon>
        <taxon>Gammaproteobacteria</taxon>
        <taxon>Legionellales</taxon>
        <taxon>Coxiellaceae</taxon>
        <taxon>Coxiella</taxon>
    </lineage>
</organism>
<reference key="1">
    <citation type="journal article" date="2009" name="Infect. Immun.">
        <title>Comparative genomics reveal extensive transposon-mediated genomic plasticity and diversity among potential effector proteins within the genus Coxiella.</title>
        <authorList>
            <person name="Beare P.A."/>
            <person name="Unsworth N."/>
            <person name="Andoh M."/>
            <person name="Voth D.E."/>
            <person name="Omsland A."/>
            <person name="Gilk S.D."/>
            <person name="Williams K.P."/>
            <person name="Sobral B.W."/>
            <person name="Kupko J.J. III"/>
            <person name="Porcella S.F."/>
            <person name="Samuel J.E."/>
            <person name="Heinzen R.A."/>
        </authorList>
    </citation>
    <scope>NUCLEOTIDE SEQUENCE [LARGE SCALE GENOMIC DNA]</scope>
    <source>
        <strain>Dugway 5J108-111</strain>
    </source>
</reference>
<dbReference type="EC" id="7.1.1.-" evidence="1"/>
<dbReference type="EMBL" id="CP000733">
    <property type="protein sequence ID" value="ABS78476.2"/>
    <property type="status" value="ALT_INIT"/>
    <property type="molecule type" value="Genomic_DNA"/>
</dbReference>
<dbReference type="RefSeq" id="WP_012220660.1">
    <property type="nucleotide sequence ID" value="NC_009727.1"/>
</dbReference>
<dbReference type="SMR" id="A9KBL3"/>
<dbReference type="KEGG" id="cbd:CBUD_0554"/>
<dbReference type="HOGENOM" id="CLU_067218_5_1_6"/>
<dbReference type="Proteomes" id="UP000008555">
    <property type="component" value="Chromosome"/>
</dbReference>
<dbReference type="GO" id="GO:0005886">
    <property type="term" value="C:plasma membrane"/>
    <property type="evidence" value="ECO:0007669"/>
    <property type="project" value="UniProtKB-SubCell"/>
</dbReference>
<dbReference type="GO" id="GO:0051539">
    <property type="term" value="F:4 iron, 4 sulfur cluster binding"/>
    <property type="evidence" value="ECO:0007669"/>
    <property type="project" value="UniProtKB-KW"/>
</dbReference>
<dbReference type="GO" id="GO:0005506">
    <property type="term" value="F:iron ion binding"/>
    <property type="evidence" value="ECO:0007669"/>
    <property type="project" value="UniProtKB-UniRule"/>
</dbReference>
<dbReference type="GO" id="GO:0050136">
    <property type="term" value="F:NADH:ubiquinone reductase (non-electrogenic) activity"/>
    <property type="evidence" value="ECO:0007669"/>
    <property type="project" value="UniProtKB-UniRule"/>
</dbReference>
<dbReference type="GO" id="GO:0048038">
    <property type="term" value="F:quinone binding"/>
    <property type="evidence" value="ECO:0007669"/>
    <property type="project" value="UniProtKB-KW"/>
</dbReference>
<dbReference type="GO" id="GO:0009060">
    <property type="term" value="P:aerobic respiration"/>
    <property type="evidence" value="ECO:0007669"/>
    <property type="project" value="TreeGrafter"/>
</dbReference>
<dbReference type="FunFam" id="3.30.70.3270:FF:000003">
    <property type="entry name" value="NADH-quinone oxidoreductase subunit I"/>
    <property type="match status" value="1"/>
</dbReference>
<dbReference type="Gene3D" id="3.30.70.3270">
    <property type="match status" value="1"/>
</dbReference>
<dbReference type="HAMAP" id="MF_01351">
    <property type="entry name" value="NDH1_NuoI"/>
    <property type="match status" value="1"/>
</dbReference>
<dbReference type="InterPro" id="IPR017896">
    <property type="entry name" value="4Fe4S_Fe-S-bd"/>
</dbReference>
<dbReference type="InterPro" id="IPR017900">
    <property type="entry name" value="4Fe4S_Fe_S_CS"/>
</dbReference>
<dbReference type="InterPro" id="IPR010226">
    <property type="entry name" value="NADH_quinone_OxRdtase_chainI"/>
</dbReference>
<dbReference type="NCBIfam" id="TIGR01971">
    <property type="entry name" value="NuoI"/>
    <property type="match status" value="1"/>
</dbReference>
<dbReference type="NCBIfam" id="NF004538">
    <property type="entry name" value="PRK05888.1-4"/>
    <property type="match status" value="1"/>
</dbReference>
<dbReference type="NCBIfam" id="NF004539">
    <property type="entry name" value="PRK05888.1-5"/>
    <property type="match status" value="1"/>
</dbReference>
<dbReference type="PANTHER" id="PTHR10849:SF20">
    <property type="entry name" value="NADH DEHYDROGENASE [UBIQUINONE] IRON-SULFUR PROTEIN 8, MITOCHONDRIAL"/>
    <property type="match status" value="1"/>
</dbReference>
<dbReference type="PANTHER" id="PTHR10849">
    <property type="entry name" value="NADH DEHYDROGENASE UBIQUINONE IRON-SULFUR PROTEIN 8, MITOCHONDRIAL"/>
    <property type="match status" value="1"/>
</dbReference>
<dbReference type="Pfam" id="PF12838">
    <property type="entry name" value="Fer4_7"/>
    <property type="match status" value="1"/>
</dbReference>
<dbReference type="SUPFAM" id="SSF46548">
    <property type="entry name" value="alpha-helical ferredoxin"/>
    <property type="match status" value="1"/>
</dbReference>
<dbReference type="PROSITE" id="PS00198">
    <property type="entry name" value="4FE4S_FER_1"/>
    <property type="match status" value="2"/>
</dbReference>
<dbReference type="PROSITE" id="PS51379">
    <property type="entry name" value="4FE4S_FER_2"/>
    <property type="match status" value="2"/>
</dbReference>
<protein>
    <recommendedName>
        <fullName evidence="1">NADH-quinone oxidoreductase subunit I</fullName>
        <ecNumber evidence="1">7.1.1.-</ecNumber>
    </recommendedName>
    <alternativeName>
        <fullName evidence="1">NADH dehydrogenase I subunit I</fullName>
    </alternativeName>
    <alternativeName>
        <fullName evidence="1">NDH-1 subunit I</fullName>
    </alternativeName>
</protein>
<sequence>MRRLKQIIKSFTLWELLKGLSLTLRYFYRKKVTIHYPDEEVPSSFRFRGMLALRRYPNGEERCIACKLCEAVCPACAITIEAGPREADGSRRTTLYDIDAFKCINCGFCEEACPVDAIVLTPEMHYSIKDRGENILTKEKLLMIGDRYEEQIARDRAKDKKYR</sequence>
<proteinExistence type="inferred from homology"/>
<keyword id="KW-0004">4Fe-4S</keyword>
<keyword id="KW-0997">Cell inner membrane</keyword>
<keyword id="KW-1003">Cell membrane</keyword>
<keyword id="KW-0408">Iron</keyword>
<keyword id="KW-0411">Iron-sulfur</keyword>
<keyword id="KW-0472">Membrane</keyword>
<keyword id="KW-0479">Metal-binding</keyword>
<keyword id="KW-0520">NAD</keyword>
<keyword id="KW-0874">Quinone</keyword>
<keyword id="KW-0677">Repeat</keyword>
<keyword id="KW-1278">Translocase</keyword>
<keyword id="KW-0830">Ubiquinone</keyword>
<evidence type="ECO:0000255" key="1">
    <source>
        <dbReference type="HAMAP-Rule" id="MF_01351"/>
    </source>
</evidence>
<evidence type="ECO:0000305" key="2"/>
<feature type="chain" id="PRO_1000086954" description="NADH-quinone oxidoreductase subunit I">
    <location>
        <begin position="1"/>
        <end position="163"/>
    </location>
</feature>
<feature type="domain" description="4Fe-4S ferredoxin-type 1" evidence="1">
    <location>
        <begin position="53"/>
        <end position="83"/>
    </location>
</feature>
<feature type="domain" description="4Fe-4S ferredoxin-type 2" evidence="1">
    <location>
        <begin position="94"/>
        <end position="123"/>
    </location>
</feature>
<feature type="binding site" evidence="1">
    <location>
        <position position="63"/>
    </location>
    <ligand>
        <name>[4Fe-4S] cluster</name>
        <dbReference type="ChEBI" id="CHEBI:49883"/>
        <label>1</label>
    </ligand>
</feature>
<feature type="binding site" evidence="1">
    <location>
        <position position="66"/>
    </location>
    <ligand>
        <name>[4Fe-4S] cluster</name>
        <dbReference type="ChEBI" id="CHEBI:49883"/>
        <label>1</label>
    </ligand>
</feature>
<feature type="binding site" evidence="1">
    <location>
        <position position="69"/>
    </location>
    <ligand>
        <name>[4Fe-4S] cluster</name>
        <dbReference type="ChEBI" id="CHEBI:49883"/>
        <label>1</label>
    </ligand>
</feature>
<feature type="binding site" evidence="1">
    <location>
        <position position="73"/>
    </location>
    <ligand>
        <name>[4Fe-4S] cluster</name>
        <dbReference type="ChEBI" id="CHEBI:49883"/>
        <label>2</label>
    </ligand>
</feature>
<feature type="binding site" evidence="1">
    <location>
        <position position="103"/>
    </location>
    <ligand>
        <name>[4Fe-4S] cluster</name>
        <dbReference type="ChEBI" id="CHEBI:49883"/>
        <label>2</label>
    </ligand>
</feature>
<feature type="binding site" evidence="1">
    <location>
        <position position="106"/>
    </location>
    <ligand>
        <name>[4Fe-4S] cluster</name>
        <dbReference type="ChEBI" id="CHEBI:49883"/>
        <label>2</label>
    </ligand>
</feature>
<feature type="binding site" evidence="1">
    <location>
        <position position="109"/>
    </location>
    <ligand>
        <name>[4Fe-4S] cluster</name>
        <dbReference type="ChEBI" id="CHEBI:49883"/>
        <label>2</label>
    </ligand>
</feature>
<feature type="binding site" evidence="1">
    <location>
        <position position="113"/>
    </location>
    <ligand>
        <name>[4Fe-4S] cluster</name>
        <dbReference type="ChEBI" id="CHEBI:49883"/>
        <label>1</label>
    </ligand>
</feature>
<accession>A9KBL3</accession>
<gene>
    <name evidence="1" type="primary">nuoI</name>
    <name type="ordered locus">CBUD_0554</name>
</gene>
<comment type="function">
    <text evidence="1">NDH-1 shuttles electrons from NADH, via FMN and iron-sulfur (Fe-S) centers, to quinones in the respiratory chain. The immediate electron acceptor for the enzyme in this species is believed to be ubiquinone. Couples the redox reaction to proton translocation (for every two electrons transferred, four hydrogen ions are translocated across the cytoplasmic membrane), and thus conserves the redox energy in a proton gradient.</text>
</comment>
<comment type="catalytic activity">
    <reaction evidence="1">
        <text>a quinone + NADH + 5 H(+)(in) = a quinol + NAD(+) + 4 H(+)(out)</text>
        <dbReference type="Rhea" id="RHEA:57888"/>
        <dbReference type="ChEBI" id="CHEBI:15378"/>
        <dbReference type="ChEBI" id="CHEBI:24646"/>
        <dbReference type="ChEBI" id="CHEBI:57540"/>
        <dbReference type="ChEBI" id="CHEBI:57945"/>
        <dbReference type="ChEBI" id="CHEBI:132124"/>
    </reaction>
</comment>
<comment type="cofactor">
    <cofactor evidence="1">
        <name>[4Fe-4S] cluster</name>
        <dbReference type="ChEBI" id="CHEBI:49883"/>
    </cofactor>
    <text evidence="1">Binds 2 [4Fe-4S] clusters per subunit.</text>
</comment>
<comment type="subunit">
    <text evidence="1">NDH-1 is composed of 14 different subunits. Subunits NuoA, H, J, K, L, M, N constitute the membrane sector of the complex.</text>
</comment>
<comment type="subcellular location">
    <subcellularLocation>
        <location evidence="1">Cell inner membrane</location>
        <topology evidence="1">Peripheral membrane protein</topology>
    </subcellularLocation>
</comment>
<comment type="similarity">
    <text evidence="1">Belongs to the complex I 23 kDa subunit family.</text>
</comment>
<comment type="sequence caution" evidence="2">
    <conflict type="erroneous initiation">
        <sequence resource="EMBL-CDS" id="ABS78476"/>
    </conflict>
</comment>